<dbReference type="EMBL" id="CP000050">
    <property type="protein sequence ID" value="AAY50372.1"/>
    <property type="molecule type" value="Genomic_DNA"/>
</dbReference>
<dbReference type="RefSeq" id="WP_010371090.1">
    <property type="nucleotide sequence ID" value="NZ_CP155948.1"/>
</dbReference>
<dbReference type="SMR" id="Q4URF1"/>
<dbReference type="GeneID" id="97210516"/>
<dbReference type="KEGG" id="xcb:XC_3328"/>
<dbReference type="HOGENOM" id="CLU_061015_2_1_6"/>
<dbReference type="Proteomes" id="UP000000420">
    <property type="component" value="Chromosome"/>
</dbReference>
<dbReference type="GO" id="GO:1990904">
    <property type="term" value="C:ribonucleoprotein complex"/>
    <property type="evidence" value="ECO:0007669"/>
    <property type="project" value="UniProtKB-KW"/>
</dbReference>
<dbReference type="GO" id="GO:0005840">
    <property type="term" value="C:ribosome"/>
    <property type="evidence" value="ECO:0007669"/>
    <property type="project" value="UniProtKB-KW"/>
</dbReference>
<dbReference type="GO" id="GO:0019843">
    <property type="term" value="F:rRNA binding"/>
    <property type="evidence" value="ECO:0007669"/>
    <property type="project" value="UniProtKB-UniRule"/>
</dbReference>
<dbReference type="GO" id="GO:0003735">
    <property type="term" value="F:structural constituent of ribosome"/>
    <property type="evidence" value="ECO:0007669"/>
    <property type="project" value="InterPro"/>
</dbReference>
<dbReference type="GO" id="GO:0000049">
    <property type="term" value="F:tRNA binding"/>
    <property type="evidence" value="ECO:0007669"/>
    <property type="project" value="UniProtKB-UniRule"/>
</dbReference>
<dbReference type="GO" id="GO:0006412">
    <property type="term" value="P:translation"/>
    <property type="evidence" value="ECO:0007669"/>
    <property type="project" value="UniProtKB-UniRule"/>
</dbReference>
<dbReference type="FunFam" id="3.30.1440.10:FF:000001">
    <property type="entry name" value="50S ribosomal protein L5"/>
    <property type="match status" value="1"/>
</dbReference>
<dbReference type="Gene3D" id="3.30.1440.10">
    <property type="match status" value="1"/>
</dbReference>
<dbReference type="HAMAP" id="MF_01333_B">
    <property type="entry name" value="Ribosomal_uL5_B"/>
    <property type="match status" value="1"/>
</dbReference>
<dbReference type="InterPro" id="IPR002132">
    <property type="entry name" value="Ribosomal_uL5"/>
</dbReference>
<dbReference type="InterPro" id="IPR020930">
    <property type="entry name" value="Ribosomal_uL5_bac-type"/>
</dbReference>
<dbReference type="InterPro" id="IPR031309">
    <property type="entry name" value="Ribosomal_uL5_C"/>
</dbReference>
<dbReference type="InterPro" id="IPR020929">
    <property type="entry name" value="Ribosomal_uL5_CS"/>
</dbReference>
<dbReference type="InterPro" id="IPR022803">
    <property type="entry name" value="Ribosomal_uL5_dom_sf"/>
</dbReference>
<dbReference type="InterPro" id="IPR031310">
    <property type="entry name" value="Ribosomal_uL5_N"/>
</dbReference>
<dbReference type="NCBIfam" id="NF000585">
    <property type="entry name" value="PRK00010.1"/>
    <property type="match status" value="1"/>
</dbReference>
<dbReference type="PANTHER" id="PTHR11994">
    <property type="entry name" value="60S RIBOSOMAL PROTEIN L11-RELATED"/>
    <property type="match status" value="1"/>
</dbReference>
<dbReference type="Pfam" id="PF00281">
    <property type="entry name" value="Ribosomal_L5"/>
    <property type="match status" value="1"/>
</dbReference>
<dbReference type="Pfam" id="PF00673">
    <property type="entry name" value="Ribosomal_L5_C"/>
    <property type="match status" value="1"/>
</dbReference>
<dbReference type="PIRSF" id="PIRSF002161">
    <property type="entry name" value="Ribosomal_L5"/>
    <property type="match status" value="1"/>
</dbReference>
<dbReference type="SUPFAM" id="SSF55282">
    <property type="entry name" value="RL5-like"/>
    <property type="match status" value="1"/>
</dbReference>
<dbReference type="PROSITE" id="PS00358">
    <property type="entry name" value="RIBOSOMAL_L5"/>
    <property type="match status" value="1"/>
</dbReference>
<sequence>MNTRLEKFYKENVVPALMKEFGYTNPMEVPKLVKVTLNMGVGEAATNKKILENAVADMSKISGQKPVVTKSRVSVASFKIRDGWPIGCKTTLRRAKMYEFLDRLINISLPRVRDFRGVSGRSFDGRGNFNMGVKEQIIFPEIDFDAVDAIRGMDIAITTTAKTDAEAKALLAAFKFPFRN</sequence>
<accession>Q4URF1</accession>
<proteinExistence type="inferred from homology"/>
<comment type="function">
    <text evidence="1">This is one of the proteins that bind and probably mediate the attachment of the 5S RNA into the large ribosomal subunit, where it forms part of the central protuberance. In the 70S ribosome it contacts protein S13 of the 30S subunit (bridge B1b), connecting the 2 subunits; this bridge is implicated in subunit movement. Contacts the P site tRNA; the 5S rRNA and some of its associated proteins might help stabilize positioning of ribosome-bound tRNAs.</text>
</comment>
<comment type="subunit">
    <text evidence="1">Part of the 50S ribosomal subunit; part of the 5S rRNA/L5/L18/L25 subcomplex. Contacts the 5S rRNA and the P site tRNA. Forms a bridge to the 30S subunit in the 70S ribosome.</text>
</comment>
<comment type="similarity">
    <text evidence="1">Belongs to the universal ribosomal protein uL5 family.</text>
</comment>
<protein>
    <recommendedName>
        <fullName evidence="1">Large ribosomal subunit protein uL5</fullName>
    </recommendedName>
    <alternativeName>
        <fullName evidence="2">50S ribosomal protein L5</fullName>
    </alternativeName>
</protein>
<name>RL5_XANC8</name>
<feature type="chain" id="PRO_0000243086" description="Large ribosomal subunit protein uL5">
    <location>
        <begin position="1"/>
        <end position="180"/>
    </location>
</feature>
<keyword id="KW-0687">Ribonucleoprotein</keyword>
<keyword id="KW-0689">Ribosomal protein</keyword>
<keyword id="KW-0694">RNA-binding</keyword>
<keyword id="KW-0699">rRNA-binding</keyword>
<keyword id="KW-0820">tRNA-binding</keyword>
<reference key="1">
    <citation type="journal article" date="2005" name="Genome Res.">
        <title>Comparative and functional genomic analyses of the pathogenicity of phytopathogen Xanthomonas campestris pv. campestris.</title>
        <authorList>
            <person name="Qian W."/>
            <person name="Jia Y."/>
            <person name="Ren S.-X."/>
            <person name="He Y.-Q."/>
            <person name="Feng J.-X."/>
            <person name="Lu L.-F."/>
            <person name="Sun Q."/>
            <person name="Ying G."/>
            <person name="Tang D.-J."/>
            <person name="Tang H."/>
            <person name="Wu W."/>
            <person name="Hao P."/>
            <person name="Wang L."/>
            <person name="Jiang B.-L."/>
            <person name="Zeng S."/>
            <person name="Gu W.-Y."/>
            <person name="Lu G."/>
            <person name="Rong L."/>
            <person name="Tian Y."/>
            <person name="Yao Z."/>
            <person name="Fu G."/>
            <person name="Chen B."/>
            <person name="Fang R."/>
            <person name="Qiang B."/>
            <person name="Chen Z."/>
            <person name="Zhao G.-P."/>
            <person name="Tang J.-L."/>
            <person name="He C."/>
        </authorList>
    </citation>
    <scope>NUCLEOTIDE SEQUENCE [LARGE SCALE GENOMIC DNA]</scope>
    <source>
        <strain>8004</strain>
    </source>
</reference>
<organism>
    <name type="scientific">Xanthomonas campestris pv. campestris (strain 8004)</name>
    <dbReference type="NCBI Taxonomy" id="314565"/>
    <lineage>
        <taxon>Bacteria</taxon>
        <taxon>Pseudomonadati</taxon>
        <taxon>Pseudomonadota</taxon>
        <taxon>Gammaproteobacteria</taxon>
        <taxon>Lysobacterales</taxon>
        <taxon>Lysobacteraceae</taxon>
        <taxon>Xanthomonas</taxon>
    </lineage>
</organism>
<evidence type="ECO:0000255" key="1">
    <source>
        <dbReference type="HAMAP-Rule" id="MF_01333"/>
    </source>
</evidence>
<evidence type="ECO:0000305" key="2"/>
<gene>
    <name evidence="1" type="primary">rplE</name>
    <name type="ordered locus">XC_3328</name>
</gene>